<feature type="chain" id="PRO_1000144105" description="Large ribosomal subunit protein uL13">
    <location>
        <begin position="1"/>
        <end position="150"/>
    </location>
</feature>
<comment type="function">
    <text evidence="1">This protein is one of the early assembly proteins of the 50S ribosomal subunit, although it is not seen to bind rRNA by itself. It is important during the early stages of 50S assembly.</text>
</comment>
<comment type="subunit">
    <text evidence="1">Part of the 50S ribosomal subunit.</text>
</comment>
<comment type="similarity">
    <text evidence="1">Belongs to the universal ribosomal protein uL13 family.</text>
</comment>
<accession>B3EMI6</accession>
<name>RL13_CHLPB</name>
<proteinExistence type="inferred from homology"/>
<organism>
    <name type="scientific">Chlorobium phaeobacteroides (strain BS1)</name>
    <dbReference type="NCBI Taxonomy" id="331678"/>
    <lineage>
        <taxon>Bacteria</taxon>
        <taxon>Pseudomonadati</taxon>
        <taxon>Chlorobiota</taxon>
        <taxon>Chlorobiia</taxon>
        <taxon>Chlorobiales</taxon>
        <taxon>Chlorobiaceae</taxon>
        <taxon>Chlorobium/Pelodictyon group</taxon>
        <taxon>Chlorobium</taxon>
    </lineage>
</organism>
<keyword id="KW-0687">Ribonucleoprotein</keyword>
<keyword id="KW-0689">Ribosomal protein</keyword>
<protein>
    <recommendedName>
        <fullName evidence="1">Large ribosomal subunit protein uL13</fullName>
    </recommendedName>
    <alternativeName>
        <fullName evidence="2">50S ribosomal protein L13</fullName>
    </alternativeName>
</protein>
<gene>
    <name evidence="1" type="primary">rplM</name>
    <name type="ordered locus">Cphamn1_2015</name>
</gene>
<evidence type="ECO:0000255" key="1">
    <source>
        <dbReference type="HAMAP-Rule" id="MF_01366"/>
    </source>
</evidence>
<evidence type="ECO:0000305" key="2"/>
<dbReference type="EMBL" id="CP001101">
    <property type="protein sequence ID" value="ACE04925.1"/>
    <property type="molecule type" value="Genomic_DNA"/>
</dbReference>
<dbReference type="SMR" id="B3EMI6"/>
<dbReference type="STRING" id="331678.Cphamn1_2015"/>
<dbReference type="KEGG" id="cpb:Cphamn1_2015"/>
<dbReference type="eggNOG" id="COG0102">
    <property type="taxonomic scope" value="Bacteria"/>
</dbReference>
<dbReference type="HOGENOM" id="CLU_082184_2_2_10"/>
<dbReference type="OrthoDB" id="9801330at2"/>
<dbReference type="GO" id="GO:0022625">
    <property type="term" value="C:cytosolic large ribosomal subunit"/>
    <property type="evidence" value="ECO:0007669"/>
    <property type="project" value="TreeGrafter"/>
</dbReference>
<dbReference type="GO" id="GO:0003729">
    <property type="term" value="F:mRNA binding"/>
    <property type="evidence" value="ECO:0007669"/>
    <property type="project" value="TreeGrafter"/>
</dbReference>
<dbReference type="GO" id="GO:0003735">
    <property type="term" value="F:structural constituent of ribosome"/>
    <property type="evidence" value="ECO:0007669"/>
    <property type="project" value="InterPro"/>
</dbReference>
<dbReference type="GO" id="GO:0017148">
    <property type="term" value="P:negative regulation of translation"/>
    <property type="evidence" value="ECO:0007669"/>
    <property type="project" value="TreeGrafter"/>
</dbReference>
<dbReference type="GO" id="GO:0006412">
    <property type="term" value="P:translation"/>
    <property type="evidence" value="ECO:0007669"/>
    <property type="project" value="UniProtKB-UniRule"/>
</dbReference>
<dbReference type="CDD" id="cd00392">
    <property type="entry name" value="Ribosomal_L13"/>
    <property type="match status" value="1"/>
</dbReference>
<dbReference type="FunFam" id="3.90.1180.10:FF:000001">
    <property type="entry name" value="50S ribosomal protein L13"/>
    <property type="match status" value="1"/>
</dbReference>
<dbReference type="Gene3D" id="3.90.1180.10">
    <property type="entry name" value="Ribosomal protein L13"/>
    <property type="match status" value="1"/>
</dbReference>
<dbReference type="HAMAP" id="MF_01366">
    <property type="entry name" value="Ribosomal_uL13"/>
    <property type="match status" value="1"/>
</dbReference>
<dbReference type="InterPro" id="IPR005822">
    <property type="entry name" value="Ribosomal_uL13"/>
</dbReference>
<dbReference type="InterPro" id="IPR005823">
    <property type="entry name" value="Ribosomal_uL13_bac-type"/>
</dbReference>
<dbReference type="InterPro" id="IPR036899">
    <property type="entry name" value="Ribosomal_uL13_sf"/>
</dbReference>
<dbReference type="NCBIfam" id="TIGR01066">
    <property type="entry name" value="rplM_bact"/>
    <property type="match status" value="1"/>
</dbReference>
<dbReference type="PANTHER" id="PTHR11545:SF2">
    <property type="entry name" value="LARGE RIBOSOMAL SUBUNIT PROTEIN UL13M"/>
    <property type="match status" value="1"/>
</dbReference>
<dbReference type="PANTHER" id="PTHR11545">
    <property type="entry name" value="RIBOSOMAL PROTEIN L13"/>
    <property type="match status" value="1"/>
</dbReference>
<dbReference type="Pfam" id="PF00572">
    <property type="entry name" value="Ribosomal_L13"/>
    <property type="match status" value="1"/>
</dbReference>
<dbReference type="PIRSF" id="PIRSF002181">
    <property type="entry name" value="Ribosomal_L13"/>
    <property type="match status" value="1"/>
</dbReference>
<dbReference type="SUPFAM" id="SSF52161">
    <property type="entry name" value="Ribosomal protein L13"/>
    <property type="match status" value="1"/>
</dbReference>
<reference key="1">
    <citation type="submission" date="2008-06" db="EMBL/GenBank/DDBJ databases">
        <title>Complete sequence of Chlorobium phaeobacteroides BS1.</title>
        <authorList>
            <consortium name="US DOE Joint Genome Institute"/>
            <person name="Lucas S."/>
            <person name="Copeland A."/>
            <person name="Lapidus A."/>
            <person name="Glavina del Rio T."/>
            <person name="Dalin E."/>
            <person name="Tice H."/>
            <person name="Bruce D."/>
            <person name="Goodwin L."/>
            <person name="Pitluck S."/>
            <person name="Schmutz J."/>
            <person name="Larimer F."/>
            <person name="Land M."/>
            <person name="Hauser L."/>
            <person name="Kyrpides N."/>
            <person name="Ovchinnikova G."/>
            <person name="Li T."/>
            <person name="Liu Z."/>
            <person name="Zhao F."/>
            <person name="Overmann J."/>
            <person name="Bryant D.A."/>
            <person name="Richardson P."/>
        </authorList>
    </citation>
    <scope>NUCLEOTIDE SEQUENCE [LARGE SCALE GENOMIC DNA]</scope>
    <source>
        <strain>BS1</strain>
    </source>
</reference>
<sequence>MSKTISFKTYSAKPGEVERKWYVVDAEGKVLGRLASEIATILRGKHKPQFTPHVDTGDFVIVTNAGKIGLSGKKLDQKTYFSHSNYPGGVKIENLKDMLRKKPEKVIEKAVWGMLPHNNLGRALFKKLKVYAGPEHPHVSQSPVEMKVNQ</sequence>